<comment type="function">
    <text>Metallothioneins have a high content of cysteine residues that bind various heavy metals.</text>
</comment>
<comment type="similarity">
    <text evidence="1">Belongs to the metallothionein superfamily. Type 15 family.</text>
</comment>
<accession>P56172</accession>
<name>MT25_BRAJU</name>
<organism>
    <name type="scientific">Brassica juncea</name>
    <name type="common">Indian mustard</name>
    <name type="synonym">Sinapis juncea</name>
    <dbReference type="NCBI Taxonomy" id="3707"/>
    <lineage>
        <taxon>Eukaryota</taxon>
        <taxon>Viridiplantae</taxon>
        <taxon>Streptophyta</taxon>
        <taxon>Embryophyta</taxon>
        <taxon>Tracheophyta</taxon>
        <taxon>Spermatophyta</taxon>
        <taxon>Magnoliopsida</taxon>
        <taxon>eudicotyledons</taxon>
        <taxon>Gunneridae</taxon>
        <taxon>Pentapetalae</taxon>
        <taxon>rosids</taxon>
        <taxon>malvids</taxon>
        <taxon>Brassicales</taxon>
        <taxon>Brassicaceae</taxon>
        <taxon>Brassiceae</taxon>
        <taxon>Brassica</taxon>
    </lineage>
</organism>
<evidence type="ECO:0000305" key="1"/>
<sequence length="80" mass="8059">MSCCGGNCGCGAGCKCVGCGGCKMYPDLSFSGETTTTETLVLGLAPAMNSQFEASGETFVAENDACKCGSDCKCNPCTCK</sequence>
<proteinExistence type="inferred from homology"/>
<feature type="chain" id="PRO_0000197391" description="Metallothionein-like protein type 2, MT2-28">
    <location>
        <begin position="1"/>
        <end position="80"/>
    </location>
</feature>
<reference key="1">
    <citation type="journal article" date="1998" name="Plant Mol. Biol.">
        <title>cDNA cloning and expression analysis of genes encoding GSH synthesis in roots of the heavy-metal accumulator Brassica juncea L.: evidence for Cd-induction of a putative mitochondrial gamma-glutamylcysteine synthetase isoform.</title>
        <authorList>
            <person name="Schaefer H.J."/>
            <person name="Haag-Kerwer A."/>
            <person name="Rausch T.H."/>
        </authorList>
    </citation>
    <scope>NUCLEOTIDE SEQUENCE [MRNA]</scope>
    <source>
        <strain>cv. Vittasso</strain>
        <tissue>Root</tissue>
    </source>
</reference>
<dbReference type="EMBL" id="Y10853">
    <property type="protein sequence ID" value="CAA71806.1"/>
    <property type="molecule type" value="mRNA"/>
</dbReference>
<dbReference type="EnsemblPlants" id="mRNA.BjuB08g59900S">
    <property type="protein sequence ID" value="cds.BjuB08g59900S"/>
    <property type="gene ID" value="BjuB08g59900S"/>
</dbReference>
<dbReference type="Gramene" id="mRNA.BjuB08g59900S">
    <property type="protein sequence ID" value="cds.BjuB08g59900S"/>
    <property type="gene ID" value="BjuB08g59900S"/>
</dbReference>
<dbReference type="GO" id="GO:0046872">
    <property type="term" value="F:metal ion binding"/>
    <property type="evidence" value="ECO:0007669"/>
    <property type="project" value="UniProtKB-KW"/>
</dbReference>
<dbReference type="InterPro" id="IPR000347">
    <property type="entry name" value="Metalthion_15p"/>
</dbReference>
<dbReference type="PANTHER" id="PTHR33543">
    <property type="entry name" value="METALLOTHIONEIN-LIKE PROTEIN 2A"/>
    <property type="match status" value="1"/>
</dbReference>
<dbReference type="PANTHER" id="PTHR33543:SF33">
    <property type="entry name" value="METALLOTHIONEIN-LIKE PROTEIN 2B"/>
    <property type="match status" value="1"/>
</dbReference>
<dbReference type="Pfam" id="PF01439">
    <property type="entry name" value="Metallothio_2"/>
    <property type="match status" value="1"/>
</dbReference>
<keyword id="KW-0479">Metal-binding</keyword>
<keyword id="KW-0480">Metal-thiolate cluster</keyword>
<protein>
    <recommendedName>
        <fullName>Metallothionein-like protein type 2, MT2-28</fullName>
    </recommendedName>
</protein>